<comment type="function">
    <text evidence="1">Recruits the ubiquitination machinery to RNA polymerase II for polyubiquitination, removal and degradation, when the transcription-coupled repair (TCR) factor RAD26 fails to efficiently displace stalled RNA polymerase II. Also involved in telomere length regulation. Binds DNA.</text>
</comment>
<comment type="subunit">
    <text evidence="1">Homodimer; may form higher order oligomers. Interacts with the large RNA polymerase II subunit RPO21; the interaction is direct and serves to bridge RPO21 to the Elongin complex in a manner dependent on transcription stress. Interacts with RAD26.</text>
</comment>
<comment type="subcellular location">
    <subcellularLocation>
        <location evidence="1">Cytoplasm</location>
    </subcellularLocation>
    <subcellularLocation>
        <location evidence="1">Nucleus</location>
    </subcellularLocation>
    <subcellularLocation>
        <location evidence="1">Chromosome</location>
        <location evidence="1">Telomere</location>
    </subcellularLocation>
    <text evidence="1">During transcription stress, localizes to the nucleus following proteolytic cleavage by the proteasome.</text>
</comment>
<comment type="PTM">
    <text evidence="1">Ubiquitinated.</text>
</comment>
<comment type="PTM">
    <text evidence="1">Proteolytically cleaved by the proteasome in response to transcription stress; the resulting N-terminal form constitutes the activated nuclear form and the C-terminal portion is degraded.</text>
</comment>
<comment type="similarity">
    <text evidence="4">Belongs to the DEF1 family.</text>
</comment>
<accession>C5M2B8</accession>
<sequence>MSTFRKSYKNQSKRFNNSHSNSSSTSVELTNLVEMFPDWEADELQGLLSENDNSLEIVIDLIVNNKVSKWEPIKKEKHKKKEKETEDHNSSTNGSTNSASTSSTAPSSDRKPYNKSKPQSSSTRPPKKQHANANYKKGGEKSAEKPKPTSTTSSTTTTPVQKETTPATNSWAAALSNDKPKKSVATTEESEPVEHAEEDGAKAQQEEQETVAELDNTTTTNGEQQEQQPEEETTQESQAPVEQAKPVLKEAAIPEPKQGSWASAITPKTVKPKAKPAPKPVSQPQPPKEEEEKEEKEPVVEEQVSEPVESIAEETVAEVSQSIPSEEPIESPVATATTTTAATTTEPSIVEQPQQQQQPQVVLPTSQQQVNSVGISFGSLSIQEESKDAEVPREEVIAEQTSQPEQTQQQQQQPIQDQQRYGLYNQQQTQQRYQQQQQSAYQQQPQQQQQQNQYSKQQQQQQQAPIQQQTAQQQYDYYNQFQQQYPQQTAQPGAQFGGYPGFDYSGYNQQAFAAASPAANHIATLGGSAGVGGGYGQYAQQAGSTDSSHSPITNQSTLQQQQAAAAALNAQQQQQQMPTPFGYPAYYNYYYNNPYFNAGGLGSTGFGAPQQGNQQGQQPTSSQGASQQGQAQPQVPSAGSQQGGASMGSNGFGGQQQYYNPNQFNNRYPGYSYPPQQQQQQQQPVQQNAGQSQQGSSQSASNSEGASDGQQSSSQGQQGQQGQGPQGVQQGQGQQPPVPQQHMMPQYGGYQQYPQYGYQDSNQYRGGWY</sequence>
<reference key="1">
    <citation type="journal article" date="2009" name="Nature">
        <title>Evolution of pathogenicity and sexual reproduction in eight Candida genomes.</title>
        <authorList>
            <person name="Butler G."/>
            <person name="Rasmussen M.D."/>
            <person name="Lin M.F."/>
            <person name="Santos M.A.S."/>
            <person name="Sakthikumar S."/>
            <person name="Munro C.A."/>
            <person name="Rheinbay E."/>
            <person name="Grabherr M."/>
            <person name="Forche A."/>
            <person name="Reedy J.L."/>
            <person name="Agrafioti I."/>
            <person name="Arnaud M.B."/>
            <person name="Bates S."/>
            <person name="Brown A.J.P."/>
            <person name="Brunke S."/>
            <person name="Costanzo M.C."/>
            <person name="Fitzpatrick D.A."/>
            <person name="de Groot P.W.J."/>
            <person name="Harris D."/>
            <person name="Hoyer L.L."/>
            <person name="Hube B."/>
            <person name="Klis F.M."/>
            <person name="Kodira C."/>
            <person name="Lennard N."/>
            <person name="Logue M.E."/>
            <person name="Martin R."/>
            <person name="Neiman A.M."/>
            <person name="Nikolaou E."/>
            <person name="Quail M.A."/>
            <person name="Quinn J."/>
            <person name="Santos M.C."/>
            <person name="Schmitzberger F.F."/>
            <person name="Sherlock G."/>
            <person name="Shah P."/>
            <person name="Silverstein K.A.T."/>
            <person name="Skrzypek M.S."/>
            <person name="Soll D."/>
            <person name="Staggs R."/>
            <person name="Stansfield I."/>
            <person name="Stumpf M.P.H."/>
            <person name="Sudbery P.E."/>
            <person name="Srikantha T."/>
            <person name="Zeng Q."/>
            <person name="Berman J."/>
            <person name="Berriman M."/>
            <person name="Heitman J."/>
            <person name="Gow N.A.R."/>
            <person name="Lorenz M.C."/>
            <person name="Birren B.W."/>
            <person name="Kellis M."/>
            <person name="Cuomo C.A."/>
        </authorList>
    </citation>
    <scope>NUCLEOTIDE SEQUENCE [LARGE SCALE GENOMIC DNA]</scope>
    <source>
        <strain>ATCC MYA-3404 / T1</strain>
    </source>
</reference>
<name>DEF1_CANTT</name>
<proteinExistence type="inferred from homology"/>
<evidence type="ECO:0000250" key="1">
    <source>
        <dbReference type="UniProtKB" id="P35732"/>
    </source>
</evidence>
<evidence type="ECO:0000255" key="2">
    <source>
        <dbReference type="PROSITE-ProRule" id="PRU00468"/>
    </source>
</evidence>
<evidence type="ECO:0000256" key="3">
    <source>
        <dbReference type="SAM" id="MobiDB-lite"/>
    </source>
</evidence>
<evidence type="ECO:0000305" key="4"/>
<protein>
    <recommendedName>
        <fullName>RNA polymerase II degradation factor 1</fullName>
    </recommendedName>
</protein>
<organism>
    <name type="scientific">Candida tropicalis (strain ATCC MYA-3404 / T1)</name>
    <name type="common">Yeast</name>
    <dbReference type="NCBI Taxonomy" id="294747"/>
    <lineage>
        <taxon>Eukaryota</taxon>
        <taxon>Fungi</taxon>
        <taxon>Dikarya</taxon>
        <taxon>Ascomycota</taxon>
        <taxon>Saccharomycotina</taxon>
        <taxon>Pichiomycetes</taxon>
        <taxon>Debaryomycetaceae</taxon>
        <taxon>Candida/Lodderomyces clade</taxon>
        <taxon>Candida</taxon>
    </lineage>
</organism>
<keyword id="KW-0158">Chromosome</keyword>
<keyword id="KW-0963">Cytoplasm</keyword>
<keyword id="KW-0227">DNA damage</keyword>
<keyword id="KW-0234">DNA repair</keyword>
<keyword id="KW-0238">DNA-binding</keyword>
<keyword id="KW-0539">Nucleus</keyword>
<keyword id="KW-1185">Reference proteome</keyword>
<keyword id="KW-0779">Telomere</keyword>
<keyword id="KW-0832">Ubl conjugation</keyword>
<keyword id="KW-0833">Ubl conjugation pathway</keyword>
<feature type="chain" id="PRO_0000405665" description="RNA polymerase II degradation factor 1">
    <location>
        <begin position="1"/>
        <end position="769"/>
    </location>
</feature>
<feature type="domain" description="CUE" evidence="2">
    <location>
        <begin position="24"/>
        <end position="67"/>
    </location>
</feature>
<feature type="region of interest" description="Disordered" evidence="3">
    <location>
        <begin position="1"/>
        <end position="27"/>
    </location>
</feature>
<feature type="region of interest" description="Disordered" evidence="3">
    <location>
        <begin position="66"/>
        <end position="368"/>
    </location>
</feature>
<feature type="region of interest" description="Disordered" evidence="3">
    <location>
        <begin position="381"/>
        <end position="472"/>
    </location>
</feature>
<feature type="region of interest" description="Disordered" evidence="3">
    <location>
        <begin position="540"/>
        <end position="559"/>
    </location>
</feature>
<feature type="region of interest" description="Disordered" evidence="3">
    <location>
        <begin position="602"/>
        <end position="769"/>
    </location>
</feature>
<feature type="compositionally biased region" description="Basic residues" evidence="3">
    <location>
        <begin position="1"/>
        <end position="12"/>
    </location>
</feature>
<feature type="compositionally biased region" description="Low complexity" evidence="3">
    <location>
        <begin position="17"/>
        <end position="26"/>
    </location>
</feature>
<feature type="compositionally biased region" description="Low complexity" evidence="3">
    <location>
        <begin position="90"/>
        <end position="107"/>
    </location>
</feature>
<feature type="compositionally biased region" description="Basic and acidic residues" evidence="3">
    <location>
        <begin position="137"/>
        <end position="147"/>
    </location>
</feature>
<feature type="compositionally biased region" description="Low complexity" evidence="3">
    <location>
        <begin position="148"/>
        <end position="168"/>
    </location>
</feature>
<feature type="compositionally biased region" description="Basic and acidic residues" evidence="3">
    <location>
        <begin position="192"/>
        <end position="205"/>
    </location>
</feature>
<feature type="compositionally biased region" description="Low complexity" evidence="3">
    <location>
        <begin position="217"/>
        <end position="227"/>
    </location>
</feature>
<feature type="compositionally biased region" description="Pro residues" evidence="3">
    <location>
        <begin position="277"/>
        <end position="286"/>
    </location>
</feature>
<feature type="compositionally biased region" description="Basic and acidic residues" evidence="3">
    <location>
        <begin position="287"/>
        <end position="299"/>
    </location>
</feature>
<feature type="compositionally biased region" description="Low complexity" evidence="3">
    <location>
        <begin position="322"/>
        <end position="345"/>
    </location>
</feature>
<feature type="compositionally biased region" description="Low complexity" evidence="3">
    <location>
        <begin position="352"/>
        <end position="368"/>
    </location>
</feature>
<feature type="compositionally biased region" description="Basic and acidic residues" evidence="3">
    <location>
        <begin position="384"/>
        <end position="396"/>
    </location>
</feature>
<feature type="compositionally biased region" description="Low complexity" evidence="3">
    <location>
        <begin position="399"/>
        <end position="472"/>
    </location>
</feature>
<feature type="compositionally biased region" description="Polar residues" evidence="3">
    <location>
        <begin position="545"/>
        <end position="557"/>
    </location>
</feature>
<feature type="compositionally biased region" description="Low complexity" evidence="3">
    <location>
        <begin position="607"/>
        <end position="640"/>
    </location>
</feature>
<feature type="compositionally biased region" description="Gly residues" evidence="3">
    <location>
        <begin position="641"/>
        <end position="654"/>
    </location>
</feature>
<feature type="compositionally biased region" description="Low complexity" evidence="3">
    <location>
        <begin position="655"/>
        <end position="666"/>
    </location>
</feature>
<feature type="compositionally biased region" description="Low complexity" evidence="3">
    <location>
        <begin position="675"/>
        <end position="718"/>
    </location>
</feature>
<feature type="compositionally biased region" description="Low complexity" evidence="3">
    <location>
        <begin position="726"/>
        <end position="735"/>
    </location>
</feature>
<feature type="compositionally biased region" description="Low complexity" evidence="3">
    <location>
        <begin position="745"/>
        <end position="759"/>
    </location>
</feature>
<feature type="compositionally biased region" description="Polar residues" evidence="3">
    <location>
        <begin position="760"/>
        <end position="769"/>
    </location>
</feature>
<gene>
    <name type="primary">DEF1</name>
    <name type="ORF">CTRG_00207</name>
</gene>
<dbReference type="EMBL" id="GG692395">
    <property type="protein sequence ID" value="EER35469.1"/>
    <property type="molecule type" value="Genomic_DNA"/>
</dbReference>
<dbReference type="RefSeq" id="XP_002545427.1">
    <property type="nucleotide sequence ID" value="XM_002545381.1"/>
</dbReference>
<dbReference type="SMR" id="C5M2B8"/>
<dbReference type="EnsemblFungi" id="CTRG_00207-t43_1">
    <property type="protein sequence ID" value="CTRG_00207-t43_1-p1"/>
    <property type="gene ID" value="CTRG_00207"/>
</dbReference>
<dbReference type="GeneID" id="8298144"/>
<dbReference type="KEGG" id="ctp:CTRG_00207"/>
<dbReference type="VEuPathDB" id="FungiDB:CTRG_00207"/>
<dbReference type="eggNOG" id="ENOG502S359">
    <property type="taxonomic scope" value="Eukaryota"/>
</dbReference>
<dbReference type="HOGENOM" id="CLU_438800_0_0_1"/>
<dbReference type="OrthoDB" id="5396806at2759"/>
<dbReference type="Proteomes" id="UP000002037">
    <property type="component" value="Unassembled WGS sequence"/>
</dbReference>
<dbReference type="GO" id="GO:0000781">
    <property type="term" value="C:chromosome, telomeric region"/>
    <property type="evidence" value="ECO:0007669"/>
    <property type="project" value="UniProtKB-SubCell"/>
</dbReference>
<dbReference type="GO" id="GO:0005737">
    <property type="term" value="C:cytoplasm"/>
    <property type="evidence" value="ECO:0007669"/>
    <property type="project" value="UniProtKB-SubCell"/>
</dbReference>
<dbReference type="GO" id="GO:0005634">
    <property type="term" value="C:nucleus"/>
    <property type="evidence" value="ECO:0007669"/>
    <property type="project" value="UniProtKB-SubCell"/>
</dbReference>
<dbReference type="GO" id="GO:0003677">
    <property type="term" value="F:DNA binding"/>
    <property type="evidence" value="ECO:0007669"/>
    <property type="project" value="UniProtKB-KW"/>
</dbReference>
<dbReference type="GO" id="GO:0043130">
    <property type="term" value="F:ubiquitin binding"/>
    <property type="evidence" value="ECO:0007669"/>
    <property type="project" value="InterPro"/>
</dbReference>
<dbReference type="GO" id="GO:0006281">
    <property type="term" value="P:DNA repair"/>
    <property type="evidence" value="ECO:0007669"/>
    <property type="project" value="UniProtKB-KW"/>
</dbReference>
<dbReference type="InterPro" id="IPR003892">
    <property type="entry name" value="CUE"/>
</dbReference>
<dbReference type="Pfam" id="PF02845">
    <property type="entry name" value="CUE"/>
    <property type="match status" value="1"/>
</dbReference>
<dbReference type="PROSITE" id="PS51140">
    <property type="entry name" value="CUE"/>
    <property type="match status" value="1"/>
</dbReference>